<name>RHAM_SHIB3</name>
<protein>
    <recommendedName>
        <fullName evidence="1">L-rhamnose mutarotase</fullName>
        <ecNumber evidence="1">5.1.3.32</ecNumber>
    </recommendedName>
    <alternativeName>
        <fullName evidence="1">Rhamnose 1-epimerase</fullName>
    </alternativeName>
    <alternativeName>
        <fullName evidence="1">Type-3 mutarotase</fullName>
    </alternativeName>
</protein>
<feature type="chain" id="PRO_1000187233" description="L-rhamnose mutarotase">
    <location>
        <begin position="1"/>
        <end position="99"/>
    </location>
</feature>
<feature type="active site" description="Proton donor" evidence="1">
    <location>
        <position position="22"/>
    </location>
</feature>
<feature type="binding site" evidence="1">
    <location>
        <position position="18"/>
    </location>
    <ligand>
        <name>substrate</name>
    </ligand>
</feature>
<feature type="binding site" evidence="1">
    <location>
        <position position="41"/>
    </location>
    <ligand>
        <name>substrate</name>
    </ligand>
</feature>
<feature type="binding site" evidence="1">
    <location>
        <begin position="76"/>
        <end position="77"/>
    </location>
    <ligand>
        <name>substrate</name>
    </ligand>
</feature>
<keyword id="KW-0119">Carbohydrate metabolism</keyword>
<keyword id="KW-0963">Cytoplasm</keyword>
<keyword id="KW-0413">Isomerase</keyword>
<keyword id="KW-1185">Reference proteome</keyword>
<keyword id="KW-0684">Rhamnose metabolism</keyword>
<organism>
    <name type="scientific">Shigella boydii serotype 18 (strain CDC 3083-94 / BS512)</name>
    <dbReference type="NCBI Taxonomy" id="344609"/>
    <lineage>
        <taxon>Bacteria</taxon>
        <taxon>Pseudomonadati</taxon>
        <taxon>Pseudomonadota</taxon>
        <taxon>Gammaproteobacteria</taxon>
        <taxon>Enterobacterales</taxon>
        <taxon>Enterobacteriaceae</taxon>
        <taxon>Shigella</taxon>
    </lineage>
</organism>
<comment type="function">
    <text evidence="1">Involved in the anomeric conversion of L-rhamnose.</text>
</comment>
<comment type="catalytic activity">
    <reaction evidence="1">
        <text>alpha-L-rhamnose = beta-L-rhamnose</text>
        <dbReference type="Rhea" id="RHEA:25584"/>
        <dbReference type="ChEBI" id="CHEBI:27586"/>
        <dbReference type="ChEBI" id="CHEBI:27907"/>
        <dbReference type="EC" id="5.1.3.32"/>
    </reaction>
</comment>
<comment type="pathway">
    <text evidence="1">Carbohydrate metabolism; L-rhamnose metabolism.</text>
</comment>
<comment type="subunit">
    <text evidence="1">Homodimer.</text>
</comment>
<comment type="subcellular location">
    <subcellularLocation>
        <location evidence="1">Cytoplasm</location>
    </subcellularLocation>
</comment>
<comment type="similarity">
    <text evidence="1">Belongs to the rhamnose mutarotase family.</text>
</comment>
<accession>B2TVP4</accession>
<proteinExistence type="inferred from homology"/>
<sequence>MIRKAFVMQVNPDAHEEYQRRHNPIWPELEAVLKSHGAHNYAIYLDKARNLLFATVEIESEERWNAVASTDVCQRWWKYMTDVMPANPDNSPVSSELQG</sequence>
<dbReference type="EC" id="5.1.3.32" evidence="1"/>
<dbReference type="EMBL" id="CP001063">
    <property type="protein sequence ID" value="ACD08597.1"/>
    <property type="molecule type" value="Genomic_DNA"/>
</dbReference>
<dbReference type="RefSeq" id="WP_000619504.1">
    <property type="nucleotide sequence ID" value="NC_010658.1"/>
</dbReference>
<dbReference type="SMR" id="B2TVP4"/>
<dbReference type="STRING" id="344609.SbBS512_E4381"/>
<dbReference type="KEGG" id="sbc:SbBS512_E4381"/>
<dbReference type="HOGENOM" id="CLU_100689_2_0_6"/>
<dbReference type="UniPathway" id="UPA00125"/>
<dbReference type="Proteomes" id="UP000001030">
    <property type="component" value="Chromosome"/>
</dbReference>
<dbReference type="GO" id="GO:0005737">
    <property type="term" value="C:cytoplasm"/>
    <property type="evidence" value="ECO:0007669"/>
    <property type="project" value="UniProtKB-SubCell"/>
</dbReference>
<dbReference type="GO" id="GO:0062192">
    <property type="term" value="F:L-rhamnose mutarotase activity"/>
    <property type="evidence" value="ECO:0007669"/>
    <property type="project" value="UniProtKB-EC"/>
</dbReference>
<dbReference type="GO" id="GO:0019301">
    <property type="term" value="P:rhamnose catabolic process"/>
    <property type="evidence" value="ECO:0007669"/>
    <property type="project" value="TreeGrafter"/>
</dbReference>
<dbReference type="FunFam" id="3.30.70.100:FF:000013">
    <property type="entry name" value="L-rhamnose mutarotase"/>
    <property type="match status" value="1"/>
</dbReference>
<dbReference type="Gene3D" id="3.30.70.100">
    <property type="match status" value="1"/>
</dbReference>
<dbReference type="HAMAP" id="MF_01663">
    <property type="entry name" value="L_rham_rotase"/>
    <property type="match status" value="1"/>
</dbReference>
<dbReference type="InterPro" id="IPR011008">
    <property type="entry name" value="Dimeric_a/b-barrel"/>
</dbReference>
<dbReference type="InterPro" id="IPR013448">
    <property type="entry name" value="L-rhamnose_mutarotase"/>
</dbReference>
<dbReference type="InterPro" id="IPR008000">
    <property type="entry name" value="Rham/fucose_mutarotase"/>
</dbReference>
<dbReference type="NCBIfam" id="TIGR02625">
    <property type="entry name" value="YiiL_rotase"/>
    <property type="match status" value="1"/>
</dbReference>
<dbReference type="PANTHER" id="PTHR34389">
    <property type="entry name" value="L-RHAMNOSE MUTAROTASE"/>
    <property type="match status" value="1"/>
</dbReference>
<dbReference type="PANTHER" id="PTHR34389:SF2">
    <property type="entry name" value="L-RHAMNOSE MUTAROTASE"/>
    <property type="match status" value="1"/>
</dbReference>
<dbReference type="Pfam" id="PF05336">
    <property type="entry name" value="rhaM"/>
    <property type="match status" value="1"/>
</dbReference>
<dbReference type="SUPFAM" id="SSF54909">
    <property type="entry name" value="Dimeric alpha+beta barrel"/>
    <property type="match status" value="1"/>
</dbReference>
<evidence type="ECO:0000255" key="1">
    <source>
        <dbReference type="HAMAP-Rule" id="MF_01663"/>
    </source>
</evidence>
<reference key="1">
    <citation type="submission" date="2008-05" db="EMBL/GenBank/DDBJ databases">
        <title>Complete sequence of Shigella boydii serotype 18 strain BS512.</title>
        <authorList>
            <person name="Rasko D.A."/>
            <person name="Rosovitz M."/>
            <person name="Maurelli A.T."/>
            <person name="Myers G."/>
            <person name="Seshadri R."/>
            <person name="Cer R."/>
            <person name="Jiang L."/>
            <person name="Ravel J."/>
            <person name="Sebastian Y."/>
        </authorList>
    </citation>
    <scope>NUCLEOTIDE SEQUENCE [LARGE SCALE GENOMIC DNA]</scope>
    <source>
        <strain>CDC 3083-94 / BS512</strain>
    </source>
</reference>
<gene>
    <name evidence="1" type="primary">rhaM</name>
    <name type="ordered locus">SbBS512_E4381</name>
</gene>